<protein>
    <recommendedName>
        <fullName evidence="6">10-deoxymethynolide desosaminyltransferase</fullName>
        <ecNumber evidence="1 3 5">2.4.1.277</ecNumber>
    </recommendedName>
</protein>
<dbReference type="EC" id="2.4.1.277" evidence="1 3 5"/>
<dbReference type="EMBL" id="AF079762">
    <property type="protein sequence ID" value="AAC68677.1"/>
    <property type="molecule type" value="Genomic_DNA"/>
</dbReference>
<dbReference type="SMR" id="Q9ZGH7"/>
<dbReference type="CAZy" id="GT1">
    <property type="family name" value="Glycosyltransferase Family 1"/>
</dbReference>
<dbReference type="KEGG" id="ag:AAC68677"/>
<dbReference type="BioCyc" id="MetaCyc:MONOMER-18406"/>
<dbReference type="BRENDA" id="2.4.1.277">
    <property type="organism ID" value="6106"/>
</dbReference>
<dbReference type="BRENDA" id="2.4.1.278">
    <property type="organism ID" value="6106"/>
</dbReference>
<dbReference type="BRENDA" id="2.4.1.328">
    <property type="organism ID" value="6106"/>
</dbReference>
<dbReference type="GO" id="GO:0016758">
    <property type="term" value="F:hexosyltransferase activity"/>
    <property type="evidence" value="ECO:0000315"/>
    <property type="project" value="UniProtKB"/>
</dbReference>
<dbReference type="GO" id="GO:0008194">
    <property type="term" value="F:UDP-glycosyltransferase activity"/>
    <property type="evidence" value="ECO:0007669"/>
    <property type="project" value="InterPro"/>
</dbReference>
<dbReference type="GO" id="GO:0017000">
    <property type="term" value="P:antibiotic biosynthetic process"/>
    <property type="evidence" value="ECO:0000315"/>
    <property type="project" value="UniProtKB"/>
</dbReference>
<dbReference type="CDD" id="cd03784">
    <property type="entry name" value="GT1_Gtf-like"/>
    <property type="match status" value="1"/>
</dbReference>
<dbReference type="FunFam" id="3.40.50.2000:FF:000261">
    <property type="entry name" value="Putative glycosyl transferase"/>
    <property type="match status" value="1"/>
</dbReference>
<dbReference type="Gene3D" id="3.40.50.2000">
    <property type="entry name" value="Glycogen Phosphorylase B"/>
    <property type="match status" value="2"/>
</dbReference>
<dbReference type="InterPro" id="IPR010610">
    <property type="entry name" value="EryCIII-like_C"/>
</dbReference>
<dbReference type="InterPro" id="IPR048284">
    <property type="entry name" value="EryCIII-like_N"/>
</dbReference>
<dbReference type="InterPro" id="IPR030953">
    <property type="entry name" value="Glycosyl_450act"/>
</dbReference>
<dbReference type="InterPro" id="IPR050426">
    <property type="entry name" value="Glycosyltransferase_28"/>
</dbReference>
<dbReference type="InterPro" id="IPR002213">
    <property type="entry name" value="UDP_glucos_trans"/>
</dbReference>
<dbReference type="NCBIfam" id="TIGR04516">
    <property type="entry name" value="glycosyl_450act"/>
    <property type="match status" value="1"/>
</dbReference>
<dbReference type="PANTHER" id="PTHR48050">
    <property type="entry name" value="STEROL 3-BETA-GLUCOSYLTRANSFERASE"/>
    <property type="match status" value="1"/>
</dbReference>
<dbReference type="PANTHER" id="PTHR48050:SF13">
    <property type="entry name" value="STEROL 3-BETA-GLUCOSYLTRANSFERASE UGT80A2"/>
    <property type="match status" value="1"/>
</dbReference>
<dbReference type="Pfam" id="PF06722">
    <property type="entry name" value="EryCIII-like_C"/>
    <property type="match status" value="1"/>
</dbReference>
<dbReference type="Pfam" id="PF21036">
    <property type="entry name" value="EryCIII-like_N"/>
    <property type="match status" value="1"/>
</dbReference>
<dbReference type="SUPFAM" id="SSF53756">
    <property type="entry name" value="UDP-Glycosyltransferase/glycogen phosphorylase"/>
    <property type="match status" value="1"/>
</dbReference>
<reference key="1">
    <citation type="journal article" date="1998" name="Proc. Natl. Acad. Sci. U.S.A.">
        <title>A gene cluster for macrolide antibiotic biosynthesis in Streptomyces venezuelae: architecture of metabolic diversity.</title>
        <authorList>
            <person name="Xue Y."/>
            <person name="Zhao L."/>
            <person name="Liu H.W."/>
            <person name="Sherman D.H."/>
        </authorList>
    </citation>
    <scope>NUCLEOTIDE SEQUENCE [GENOMIC DNA]</scope>
    <source>
        <strain>ATCC 15439 / DSM 41110 / IMRU3627 / M-2140</strain>
    </source>
</reference>
<reference key="2">
    <citation type="journal article" date="2004" name="J. Am. Chem. Soc.">
        <title>Characterization of the glycosyltransferase activity of desVII: analysis of and implications for the biosynthesis of macrolide antibiotics.</title>
        <authorList>
            <person name="Borisova S.A."/>
            <person name="Zhao L."/>
            <person name="Melancon C.E. III"/>
            <person name="Kao C.L."/>
            <person name="Liu H.W."/>
        </authorList>
    </citation>
    <scope>FUNCTION</scope>
    <scope>CATALYTIC ACTIVITY</scope>
    <scope>DISRUPTION PHENOTYPE</scope>
</reference>
<reference key="3">
    <citation type="journal article" date="2006" name="Angew. Chem. Int. Ed.">
        <title>Substrate specificity of the macrolide-glycosylating enzyme pair DesVII/DesVIII: opportunities, limitations, and mechanistic hypotheses.</title>
        <authorList>
            <person name="Borisova S.A."/>
            <person name="Zhang C."/>
            <person name="Takahashi H."/>
            <person name="Zhang H."/>
            <person name="Wong A.W."/>
            <person name="Thorson J.S."/>
            <person name="Liu H.W."/>
        </authorList>
    </citation>
    <scope>FUNCTION</scope>
    <scope>SUBSTRATE SPECIFICITY</scope>
</reference>
<reference key="4">
    <citation type="journal article" date="2007" name="Gene">
        <title>Functional analysis of desVIII homologues involved in glycosylation of macrolide antibiotics by interspecies complementation.</title>
        <authorList>
            <person name="Hong J.S."/>
            <person name="Park S.J."/>
            <person name="Parajuli N."/>
            <person name="Park S.R."/>
            <person name="Koh H.S."/>
            <person name="Jung W.S."/>
            <person name="Choi C.Y."/>
            <person name="Yoon Y.J."/>
        </authorList>
    </citation>
    <scope>FUNCTION</scope>
    <scope>CATALYTIC ACTIVITY</scope>
    <source>
        <strain>ATCC 15439 / DSM 41110 / IMRU3627 / M-2140</strain>
    </source>
</reference>
<reference key="5">
    <citation type="journal article" date="2008" name="ChemBioChem">
        <title>Glycosylation of acyclic and cyclic aglycone substrates by macrolide glycosyltransferase DesVII/DesVIII: analysis and implications.</title>
        <authorList>
            <person name="Borisova S.A."/>
            <person name="Kim H.J."/>
            <person name="Pu X."/>
            <person name="Liu H.W."/>
        </authorList>
    </citation>
    <scope>FUNCTION</scope>
    <scope>SUBSTRATE SPECIFICITY</scope>
</reference>
<reference key="6">
    <citation type="journal article" date="2010" name="Biochemistry">
        <title>Characterization of glycosyltransferase DesVII and its auxiliary partner protein DesVIII in the methymycin/picromycin biosynthetic pathway.</title>
        <authorList>
            <person name="Borisova S.A."/>
            <person name="Liu H.W."/>
        </authorList>
    </citation>
    <scope>FUNCTION</scope>
    <scope>CATALYTIC ACTIVITY</scope>
    <scope>SUBUNIT</scope>
    <source>
        <strain>ATCC 15439 / DSM 41110 / IMRU3627 / M-2140</strain>
    </source>
</reference>
<proteinExistence type="evidence at protein level"/>
<organism>
    <name type="scientific">Streptomyces venezuelae</name>
    <dbReference type="NCBI Taxonomy" id="54571"/>
    <lineage>
        <taxon>Bacteria</taxon>
        <taxon>Bacillati</taxon>
        <taxon>Actinomycetota</taxon>
        <taxon>Actinomycetes</taxon>
        <taxon>Kitasatosporales</taxon>
        <taxon>Streptomycetaceae</taxon>
        <taxon>Streptomyces</taxon>
    </lineage>
</organism>
<comment type="function">
    <text evidence="1 2 3 4 5">Involved in the biosynthesis of the macrolide antibiotics methymycin, neomethymycin, narbomycin, and pikromycin. Catalyzes the attachment of dTDP-D-desosamine onto 12- and 14-membered macrolactone rings 10-deoxymethynolide and narbonolide to produce 10-deoxymethymycin (YC-17) and narbomycin. DesVII is unique among glycosyltransferases in that it requires an additional protein component, DesVIII, for its activity. DesVII can recognize and process not only cyclic substrates of different ring size, but also a variety of linear substrates albeit with reduced, but measurable activities (PubMed:18548476). Both L-sugars and D-sugars are recognized as substrates and variant substitutions at C-3 and C-4 are tolerated, but deoxygenation at C-6 is required (PubMed:16538696).</text>
</comment>
<comment type="catalytic activity">
    <reaction evidence="1 3 5">
        <text>10-deoxymethynolide + dTDP-alpha-D-desosamine = 10-deoxymethymycin + dTDP + H(+)</text>
        <dbReference type="Rhea" id="RHEA:31627"/>
        <dbReference type="ChEBI" id="CHEBI:15378"/>
        <dbReference type="ChEBI" id="CHEBI:29461"/>
        <dbReference type="ChEBI" id="CHEBI:58369"/>
        <dbReference type="ChEBI" id="CHEBI:63260"/>
        <dbReference type="ChEBI" id="CHEBI:63307"/>
        <dbReference type="EC" id="2.4.1.277"/>
    </reaction>
</comment>
<comment type="pathway">
    <text evidence="9">Antibiotic biosynthesis.</text>
</comment>
<comment type="subunit">
    <text evidence="5">Forms a complex with DesVIII.</text>
</comment>
<comment type="disruption phenotype">
    <text evidence="1">Cells lacking this gene are not able to produce glycosylated macrolides.</text>
</comment>
<comment type="miscellaneous">
    <text evidence="5">DesVIII assists the folding of the DesVII polypeptide. However, unlike chaperones, it remains bound to DesVII during catalysis, forming a tight DesVII/DesVIII complex. Although the formation of the DesVII/DesVIII complex is essential for the catalytic activity, DesVIII is unlikely to be involved in catalysis directly.</text>
</comment>
<comment type="similarity">
    <text evidence="8">Belongs to the glycosyltransferase 28 family.</text>
</comment>
<accession>Q9ZGH7</accession>
<sequence>MRVLLTSFAHHTHYYGLVPLAWALLAAGHEVRVASQPALTDTITGSGLAAVPVGTDHLIHEYRVRMAGEPRPNHPAIAFDEARPEPLDWDHALGIEAILAPYFHLLANNDSMVDDLVDFARSWQPDLVLWEPTTYAGAVAAQVTGAAHARVLWGPDVMGSARRKFVALRDRQPPEHREDPTAEWLTWTLDRYGASFEEELLTGQFTIDPTPPSLRLDTGLPTVGMRYVPYNGTSVVPDWLSEPPARPRVCLTLGVSAREVLGGDGVSQGDILEALADLDIELVATLDASQRAEIRNYPKHTRFTDFVPMHALLPSCSAIIHHGGAGTYATAVINAVPQVMLAELWDAPVKARAVAEQGAGFFLPPAELTPQAVRDAVVRILDDPSVATAAHRLREETFGDPTPAGIVPELERLAAQHRRPPADARH</sequence>
<evidence type="ECO:0000269" key="1">
    <source>
    </source>
</evidence>
<evidence type="ECO:0000269" key="2">
    <source>
    </source>
</evidence>
<evidence type="ECO:0000269" key="3">
    <source>
    </source>
</evidence>
<evidence type="ECO:0000269" key="4">
    <source>
    </source>
</evidence>
<evidence type="ECO:0000269" key="5">
    <source>
    </source>
</evidence>
<evidence type="ECO:0000303" key="6">
    <source>
    </source>
</evidence>
<evidence type="ECO:0000303" key="7">
    <source>
    </source>
</evidence>
<evidence type="ECO:0000305" key="8"/>
<evidence type="ECO:0000305" key="9">
    <source>
    </source>
</evidence>
<gene>
    <name evidence="7" type="primary">desVII</name>
</gene>
<name>DES7_STRVZ</name>
<feature type="chain" id="PRO_0000435701" description="10-deoxymethynolide desosaminyltransferase">
    <location>
        <begin position="1"/>
        <end position="426"/>
    </location>
</feature>
<keyword id="KW-0045">Antibiotic biosynthesis</keyword>
<keyword id="KW-0328">Glycosyltransferase</keyword>
<keyword id="KW-0808">Transferase</keyword>